<reference key="1">
    <citation type="journal article" date="2000" name="Nature">
        <title>The genome sequence of the thermoacidophilic scavenger Thermoplasma acidophilum.</title>
        <authorList>
            <person name="Ruepp A."/>
            <person name="Graml W."/>
            <person name="Santos-Martinez M.-L."/>
            <person name="Koretke K.K."/>
            <person name="Volker C."/>
            <person name="Mewes H.-W."/>
            <person name="Frishman D."/>
            <person name="Stocker S."/>
            <person name="Lupas A.N."/>
            <person name="Baumeister W."/>
        </authorList>
    </citation>
    <scope>NUCLEOTIDE SEQUENCE [LARGE SCALE GENOMIC DNA]</scope>
    <source>
        <strain>ATCC 25905 / DSM 1728 / JCM 9062 / NBRC 15155 / AMRC-C165</strain>
    </source>
</reference>
<proteinExistence type="inferred from homology"/>
<accession>Q9HIH8</accession>
<protein>
    <recommendedName>
        <fullName>GMP synthase [glutamine-hydrolyzing] subunit B</fullName>
        <ecNumber>6.3.5.2</ecNumber>
    </recommendedName>
    <alternativeName>
        <fullName>GMP synthetase</fullName>
    </alternativeName>
</protein>
<sequence>MSTSSYIDQIKNEISEKVKGRAIIAVSGGQDSSLLSVLASQVLGDRLLCVFVDTGLIRIGEVDRVRKFFEEHAMNYRIVDASKRFLEALKGITDPEEKRKIIGKMFIDVLNEEAENFHAEYLLQGTIAPDWIESGGQKRDTIKSHHNVGGLPKEMKLKLVEPLRDFYKDEIRAMSRELGLRTDLQPFPGPGLAVRIVGEITPEKLDLLRRATRIVEDKIESALKPEERPWQYFAVLLPVKTTGVHGDRRAYGYTVAVRMIDSIDAMTGTFTKPSWDLLEDIANTITDEIPDINRVVYDITNKPPATIEWE</sequence>
<organism>
    <name type="scientific">Thermoplasma acidophilum (strain ATCC 25905 / DSM 1728 / JCM 9062 / NBRC 15155 / AMRC-C165)</name>
    <dbReference type="NCBI Taxonomy" id="273075"/>
    <lineage>
        <taxon>Archaea</taxon>
        <taxon>Methanobacteriati</taxon>
        <taxon>Thermoplasmatota</taxon>
        <taxon>Thermoplasmata</taxon>
        <taxon>Thermoplasmatales</taxon>
        <taxon>Thermoplasmataceae</taxon>
        <taxon>Thermoplasma</taxon>
    </lineage>
</organism>
<feature type="chain" id="PRO_0000140253" description="GMP synthase [glutamine-hydrolyzing] subunit B">
    <location>
        <begin position="1"/>
        <end position="310"/>
    </location>
</feature>
<feature type="domain" description="GMPS ATP-PPase">
    <location>
        <begin position="1"/>
        <end position="187"/>
    </location>
</feature>
<feature type="binding site" evidence="1">
    <location>
        <begin position="27"/>
        <end position="33"/>
    </location>
    <ligand>
        <name>ATP</name>
        <dbReference type="ChEBI" id="CHEBI:30616"/>
    </ligand>
</feature>
<dbReference type="EC" id="6.3.5.2"/>
<dbReference type="EMBL" id="AL445067">
    <property type="protein sequence ID" value="CAC12482.1"/>
    <property type="molecule type" value="Genomic_DNA"/>
</dbReference>
<dbReference type="RefSeq" id="WP_010901768.1">
    <property type="nucleotide sequence ID" value="NC_002578.1"/>
</dbReference>
<dbReference type="SMR" id="Q9HIH8"/>
<dbReference type="FunCoup" id="Q9HIH8">
    <property type="interactions" value="253"/>
</dbReference>
<dbReference type="STRING" id="273075.gene:9572588"/>
<dbReference type="PaxDb" id="273075-Ta1361"/>
<dbReference type="EnsemblBacteria" id="CAC12482">
    <property type="protein sequence ID" value="CAC12482"/>
    <property type="gene ID" value="CAC12482"/>
</dbReference>
<dbReference type="KEGG" id="tac:Ta1361"/>
<dbReference type="eggNOG" id="arCOG00085">
    <property type="taxonomic scope" value="Archaea"/>
</dbReference>
<dbReference type="HOGENOM" id="CLU_014340_0_0_2"/>
<dbReference type="InParanoid" id="Q9HIH8"/>
<dbReference type="OrthoDB" id="33844at2157"/>
<dbReference type="UniPathway" id="UPA00189">
    <property type="reaction ID" value="UER00296"/>
</dbReference>
<dbReference type="Proteomes" id="UP000001024">
    <property type="component" value="Chromosome"/>
</dbReference>
<dbReference type="GO" id="GO:0005829">
    <property type="term" value="C:cytosol"/>
    <property type="evidence" value="ECO:0007669"/>
    <property type="project" value="TreeGrafter"/>
</dbReference>
<dbReference type="GO" id="GO:0005524">
    <property type="term" value="F:ATP binding"/>
    <property type="evidence" value="ECO:0007669"/>
    <property type="project" value="UniProtKB-UniRule"/>
</dbReference>
<dbReference type="GO" id="GO:0003921">
    <property type="term" value="F:GMP synthase activity"/>
    <property type="evidence" value="ECO:0007669"/>
    <property type="project" value="InterPro"/>
</dbReference>
<dbReference type="CDD" id="cd01997">
    <property type="entry name" value="GMP_synthase_C"/>
    <property type="match status" value="1"/>
</dbReference>
<dbReference type="FunFam" id="3.30.300.10:FF:000002">
    <property type="entry name" value="GMP synthase [glutamine-hydrolyzing]"/>
    <property type="match status" value="1"/>
</dbReference>
<dbReference type="Gene3D" id="3.30.300.10">
    <property type="match status" value="1"/>
</dbReference>
<dbReference type="Gene3D" id="3.40.50.620">
    <property type="entry name" value="HUPs"/>
    <property type="match status" value="1"/>
</dbReference>
<dbReference type="HAMAP" id="MF_00345">
    <property type="entry name" value="GMP_synthase_B"/>
    <property type="match status" value="1"/>
</dbReference>
<dbReference type="InterPro" id="IPR001674">
    <property type="entry name" value="GMP_synth_C"/>
</dbReference>
<dbReference type="InterPro" id="IPR026598">
    <property type="entry name" value="GMP_synthase_B"/>
</dbReference>
<dbReference type="InterPro" id="IPR025777">
    <property type="entry name" value="GMPS_ATP_PPase_dom"/>
</dbReference>
<dbReference type="InterPro" id="IPR022310">
    <property type="entry name" value="NAD/GMP_synthase"/>
</dbReference>
<dbReference type="InterPro" id="IPR014729">
    <property type="entry name" value="Rossmann-like_a/b/a_fold"/>
</dbReference>
<dbReference type="NCBIfam" id="TIGR00884">
    <property type="entry name" value="guaA_Cterm"/>
    <property type="match status" value="1"/>
</dbReference>
<dbReference type="PANTHER" id="PTHR11922:SF2">
    <property type="entry name" value="GMP SYNTHASE [GLUTAMINE-HYDROLYZING]"/>
    <property type="match status" value="1"/>
</dbReference>
<dbReference type="PANTHER" id="PTHR11922">
    <property type="entry name" value="GMP SYNTHASE-RELATED"/>
    <property type="match status" value="1"/>
</dbReference>
<dbReference type="Pfam" id="PF00958">
    <property type="entry name" value="GMP_synt_C"/>
    <property type="match status" value="1"/>
</dbReference>
<dbReference type="Pfam" id="PF02540">
    <property type="entry name" value="NAD_synthase"/>
    <property type="match status" value="1"/>
</dbReference>
<dbReference type="SUPFAM" id="SSF52402">
    <property type="entry name" value="Adenine nucleotide alpha hydrolases-like"/>
    <property type="match status" value="1"/>
</dbReference>
<dbReference type="SUPFAM" id="SSF54810">
    <property type="entry name" value="GMP synthetase C-terminal dimerisation domain"/>
    <property type="match status" value="1"/>
</dbReference>
<dbReference type="PROSITE" id="PS51553">
    <property type="entry name" value="GMPS_ATP_PPASE"/>
    <property type="match status" value="1"/>
</dbReference>
<name>GUAAB_THEAC</name>
<gene>
    <name type="primary">guaAB</name>
    <name type="ordered locus">Ta1361</name>
</gene>
<keyword id="KW-0067">ATP-binding</keyword>
<keyword id="KW-0332">GMP biosynthesis</keyword>
<keyword id="KW-0436">Ligase</keyword>
<keyword id="KW-0547">Nucleotide-binding</keyword>
<keyword id="KW-0658">Purine biosynthesis</keyword>
<keyword id="KW-1185">Reference proteome</keyword>
<evidence type="ECO:0000250" key="1"/>
<evidence type="ECO:0000305" key="2"/>
<comment type="function">
    <text evidence="1">Catalyzes the synthesis of GMP from XMP.</text>
</comment>
<comment type="catalytic activity">
    <reaction>
        <text>XMP + L-glutamine + ATP + H2O = GMP + L-glutamate + AMP + diphosphate + 2 H(+)</text>
        <dbReference type="Rhea" id="RHEA:11680"/>
        <dbReference type="ChEBI" id="CHEBI:15377"/>
        <dbReference type="ChEBI" id="CHEBI:15378"/>
        <dbReference type="ChEBI" id="CHEBI:29985"/>
        <dbReference type="ChEBI" id="CHEBI:30616"/>
        <dbReference type="ChEBI" id="CHEBI:33019"/>
        <dbReference type="ChEBI" id="CHEBI:57464"/>
        <dbReference type="ChEBI" id="CHEBI:58115"/>
        <dbReference type="ChEBI" id="CHEBI:58359"/>
        <dbReference type="ChEBI" id="CHEBI:456215"/>
        <dbReference type="EC" id="6.3.5.2"/>
    </reaction>
</comment>
<comment type="pathway">
    <text>Purine metabolism; GMP biosynthesis; GMP from XMP (L-Gln route): step 1/1.</text>
</comment>
<comment type="subunit">
    <text evidence="2">Heterodimer composed of a glutamine amidotransferase subunit (A) and a GMP-binding subunit (B).</text>
</comment>